<organism>
    <name type="scientific">Escherichia coli (strain K12 / MC4100 / BW2952)</name>
    <dbReference type="NCBI Taxonomy" id="595496"/>
    <lineage>
        <taxon>Bacteria</taxon>
        <taxon>Pseudomonadati</taxon>
        <taxon>Pseudomonadota</taxon>
        <taxon>Gammaproteobacteria</taxon>
        <taxon>Enterobacterales</taxon>
        <taxon>Enterobacteriaceae</taxon>
        <taxon>Escherichia</taxon>
    </lineage>
</organism>
<protein>
    <recommendedName>
        <fullName evidence="2">Exoribonuclease 2</fullName>
        <ecNumber evidence="2">3.1.13.1</ecNumber>
    </recommendedName>
    <alternativeName>
        <fullName evidence="2">Exoribonuclease II</fullName>
        <shortName evidence="2">RNase II</shortName>
        <shortName evidence="2">Ribonuclease II</shortName>
    </alternativeName>
</protein>
<keyword id="KW-0963">Cytoplasm</keyword>
<keyword id="KW-0269">Exonuclease</keyword>
<keyword id="KW-0378">Hydrolase</keyword>
<keyword id="KW-0540">Nuclease</keyword>
<keyword id="KW-0694">RNA-binding</keyword>
<name>RNB_ECOBW</name>
<reference key="1">
    <citation type="journal article" date="2009" name="J. Bacteriol.">
        <title>Genomic sequencing reveals regulatory mutations and recombinational events in the widely used MC4100 lineage of Escherichia coli K-12.</title>
        <authorList>
            <person name="Ferenci T."/>
            <person name="Zhou Z."/>
            <person name="Betteridge T."/>
            <person name="Ren Y."/>
            <person name="Liu Y."/>
            <person name="Feng L."/>
            <person name="Reeves P.R."/>
            <person name="Wang L."/>
        </authorList>
    </citation>
    <scope>NUCLEOTIDE SEQUENCE [LARGE SCALE GENOMIC DNA]</scope>
    <source>
        <strain>K12 / MC4100 / BW2952</strain>
    </source>
</reference>
<proteinExistence type="inferred from homology"/>
<comment type="function">
    <text evidence="2">Involved in mRNA degradation. Hydrolyzes single-stranded polyribonucleotides processively in the 3' to 5' direction.</text>
</comment>
<comment type="catalytic activity">
    <reaction evidence="2">
        <text>Exonucleolytic cleavage in the 3'- to 5'-direction to yield nucleoside 5'-phosphates.</text>
        <dbReference type="EC" id="3.1.13.1"/>
    </reaction>
</comment>
<comment type="subcellular location">
    <subcellularLocation>
        <location evidence="2">Cytoplasm</location>
    </subcellularLocation>
</comment>
<comment type="similarity">
    <text evidence="2">Belongs to the RNR ribonuclease family. RNase II subfamily.</text>
</comment>
<accession>C4ZTY2</accession>
<gene>
    <name evidence="2" type="primary">rnb</name>
    <name type="ordered locus">BWG_1118</name>
</gene>
<sequence>MFQDNPLLAQLKQQLHSQTPRAEGVVKATEKGFGFLEVDAQKSYFIPPPQMKKVMHGDRIIAVIHSEKERESAEPEELVEPFLTRFVGKVQGKNDRLAIVPDHPLLKDAIPCRAARGLNHEFKEGDWAVAEMRRHPLKGDRSFYAELTQYITFGDDHFVPWWVTLARHNLEKEAPDGVATEMLDEGLVREDLTALDFVTIDSASTEDMDDALFAKALPDDKLQLIVAIADPTAWIAEGSKLDKAAKIRAFTNYLPGFNIPMLPRELSDDLCSLRANEVRPVLACRMTLSADGTIEDNIEFFAATIESKAKLVYDQVSDWLENTGDWQPESEAIAEQVRLLAQICQRRGEWRHNHALVFKDRPDYRFILGEKGEVLDIVAEPRRIANRIVEEAMIAANICAARVLRDKLGFGIYNVHMGFDPANADALAALLKTHGLHVDAEEVLTLDGFCKLRRELDAQPTGFLDSRIRRFQSFAEISTEPGPHFGLGLEAYATWTSPIRKYGDMINHRLLKAVIKGETATRPQDEITVQMAERRRLNRMAERDVGDWLYARFLKDKAGTDTRFAAEIVDISRGGMRVRLVDNGAIAFIPAPFLHAVRDELVCSQENGTVQIKGETVYKVTDVIDVTIAEVRMETRSIIARPVA</sequence>
<dbReference type="EC" id="3.1.13.1" evidence="2"/>
<dbReference type="EMBL" id="CP001396">
    <property type="protein sequence ID" value="ACR65470.1"/>
    <property type="molecule type" value="Genomic_DNA"/>
</dbReference>
<dbReference type="RefSeq" id="WP_000484984.1">
    <property type="nucleotide sequence ID" value="NC_012759.1"/>
</dbReference>
<dbReference type="SMR" id="C4ZTY2"/>
<dbReference type="KEGG" id="ebw:BWG_1118"/>
<dbReference type="HOGENOM" id="CLU_002333_7_3_6"/>
<dbReference type="GO" id="GO:0005829">
    <property type="term" value="C:cytosol"/>
    <property type="evidence" value="ECO:0007669"/>
    <property type="project" value="TreeGrafter"/>
</dbReference>
<dbReference type="GO" id="GO:0008859">
    <property type="term" value="F:exoribonuclease II activity"/>
    <property type="evidence" value="ECO:0007669"/>
    <property type="project" value="UniProtKB-UniRule"/>
</dbReference>
<dbReference type="GO" id="GO:0003723">
    <property type="term" value="F:RNA binding"/>
    <property type="evidence" value="ECO:0007669"/>
    <property type="project" value="UniProtKB-KW"/>
</dbReference>
<dbReference type="GO" id="GO:0006402">
    <property type="term" value="P:mRNA catabolic process"/>
    <property type="evidence" value="ECO:0007669"/>
    <property type="project" value="UniProtKB-UniRule"/>
</dbReference>
<dbReference type="FunFam" id="2.40.50.140:FF:000079">
    <property type="entry name" value="Exoribonuclease 2"/>
    <property type="match status" value="1"/>
</dbReference>
<dbReference type="FunFam" id="2.40.50.140:FF:000081">
    <property type="entry name" value="Exoribonuclease 2"/>
    <property type="match status" value="1"/>
</dbReference>
<dbReference type="FunFam" id="2.40.50.640:FF:000001">
    <property type="entry name" value="Exoribonuclease 2"/>
    <property type="match status" value="1"/>
</dbReference>
<dbReference type="Gene3D" id="2.40.50.640">
    <property type="match status" value="1"/>
</dbReference>
<dbReference type="Gene3D" id="2.40.50.140">
    <property type="entry name" value="Nucleic acid-binding proteins"/>
    <property type="match status" value="2"/>
</dbReference>
<dbReference type="HAMAP" id="MF_01036">
    <property type="entry name" value="RNase_II"/>
    <property type="match status" value="1"/>
</dbReference>
<dbReference type="InterPro" id="IPR011129">
    <property type="entry name" value="CSD"/>
</dbReference>
<dbReference type="InterPro" id="IPR012340">
    <property type="entry name" value="NA-bd_OB-fold"/>
</dbReference>
<dbReference type="InterPro" id="IPR013223">
    <property type="entry name" value="RNase_B_OB_dom"/>
</dbReference>
<dbReference type="InterPro" id="IPR011804">
    <property type="entry name" value="RNase_II"/>
</dbReference>
<dbReference type="InterPro" id="IPR001900">
    <property type="entry name" value="RNase_II/R"/>
</dbReference>
<dbReference type="InterPro" id="IPR022966">
    <property type="entry name" value="RNase_II/R_CS"/>
</dbReference>
<dbReference type="InterPro" id="IPR004476">
    <property type="entry name" value="RNase_II/RNase_R"/>
</dbReference>
<dbReference type="InterPro" id="IPR050180">
    <property type="entry name" value="RNR_Ribonuclease"/>
</dbReference>
<dbReference type="InterPro" id="IPR003029">
    <property type="entry name" value="S1_domain"/>
</dbReference>
<dbReference type="NCBIfam" id="TIGR00358">
    <property type="entry name" value="3_prime_RNase"/>
    <property type="match status" value="1"/>
</dbReference>
<dbReference type="NCBIfam" id="NF003455">
    <property type="entry name" value="PRK05054.1"/>
    <property type="match status" value="1"/>
</dbReference>
<dbReference type="NCBIfam" id="TIGR02062">
    <property type="entry name" value="RNase_B"/>
    <property type="match status" value="1"/>
</dbReference>
<dbReference type="PANTHER" id="PTHR23355:SF37">
    <property type="entry name" value="EXORIBONUCLEASE 2"/>
    <property type="match status" value="1"/>
</dbReference>
<dbReference type="PANTHER" id="PTHR23355">
    <property type="entry name" value="RIBONUCLEASE"/>
    <property type="match status" value="1"/>
</dbReference>
<dbReference type="Pfam" id="PF08206">
    <property type="entry name" value="OB_RNB"/>
    <property type="match status" value="1"/>
</dbReference>
<dbReference type="Pfam" id="PF00773">
    <property type="entry name" value="RNB"/>
    <property type="match status" value="1"/>
</dbReference>
<dbReference type="Pfam" id="PF00575">
    <property type="entry name" value="S1"/>
    <property type="match status" value="1"/>
</dbReference>
<dbReference type="SMART" id="SM00357">
    <property type="entry name" value="CSP"/>
    <property type="match status" value="1"/>
</dbReference>
<dbReference type="SMART" id="SM00955">
    <property type="entry name" value="RNB"/>
    <property type="match status" value="1"/>
</dbReference>
<dbReference type="SUPFAM" id="SSF50249">
    <property type="entry name" value="Nucleic acid-binding proteins"/>
    <property type="match status" value="4"/>
</dbReference>
<dbReference type="PROSITE" id="PS01175">
    <property type="entry name" value="RIBONUCLEASE_II"/>
    <property type="match status" value="1"/>
</dbReference>
<evidence type="ECO:0000255" key="1"/>
<evidence type="ECO:0000255" key="2">
    <source>
        <dbReference type="HAMAP-Rule" id="MF_01036"/>
    </source>
</evidence>
<feature type="chain" id="PRO_1000213378" description="Exoribonuclease 2">
    <location>
        <begin position="1"/>
        <end position="644"/>
    </location>
</feature>
<feature type="domain" description="RNB" evidence="1">
    <location>
        <begin position="189"/>
        <end position="516"/>
    </location>
</feature>
<feature type="domain" description="S1 motif" evidence="2">
    <location>
        <begin position="561"/>
        <end position="643"/>
    </location>
</feature>